<proteinExistence type="predicted"/>
<sequence>MSKRIVVISDTQIPFDDRKQLKAVIGYIGDTQPDEVVHIGDLMDYPSPSRWTKGTKEEFAQRIKPDSEQCKRRFLEPLRQVYDGPVGVHEGNHDRRPVDYLHQFAPALVEYVSSFQFQNLLDFDGFGVDVLPEFYKIAPGWISTHGHRGGVRVTQKSADTAYNAMMRFGTSVIIGHTHRQGIKPHTLGYGGNQKVLWSMEVGNLMNMKLAQYLKGATANWQSGFALLTVDGQHVKPELVPIVGGRFSVDGRVWEV</sequence>
<feature type="chain" id="PRO_0000164783" description="Gene 54 protein">
    <location>
        <begin position="1"/>
        <end position="255"/>
    </location>
</feature>
<reference key="1">
    <citation type="journal article" date="1993" name="Mol. Microbiol.">
        <title>DNA sequence, structure and gene expression of mycobacteriophage L5: a phage system for mycobacterial genetics.</title>
        <authorList>
            <person name="Hatfull G.F."/>
            <person name="Sarkis G.J."/>
        </authorList>
    </citation>
    <scope>NUCLEOTIDE SEQUENCE [LARGE SCALE GENOMIC DNA]</scope>
</reference>
<accession>Q05264</accession>
<organismHost>
    <name type="scientific">Mycobacterium</name>
    <dbReference type="NCBI Taxonomy" id="1763"/>
</organismHost>
<organism>
    <name type="scientific">Mycobacterium phage L5</name>
    <name type="common">Mycobacteriophage L5</name>
    <dbReference type="NCBI Taxonomy" id="31757"/>
    <lineage>
        <taxon>Viruses</taxon>
        <taxon>Duplodnaviria</taxon>
        <taxon>Heunggongvirae</taxon>
        <taxon>Uroviricota</taxon>
        <taxon>Caudoviricetes</taxon>
        <taxon>Fromanvirus</taxon>
    </lineage>
</organism>
<dbReference type="EMBL" id="Z18946">
    <property type="protein sequence ID" value="CAA79430.1"/>
    <property type="molecule type" value="Genomic_DNA"/>
</dbReference>
<dbReference type="PIR" id="S30999">
    <property type="entry name" value="S30999"/>
</dbReference>
<dbReference type="RefSeq" id="NP_039718.1">
    <property type="nucleotide sequence ID" value="NC_001335.1"/>
</dbReference>
<dbReference type="GeneID" id="2942980"/>
<dbReference type="KEGG" id="vg:2942980"/>
<dbReference type="OrthoDB" id="5553at10239"/>
<dbReference type="Proteomes" id="UP000002123">
    <property type="component" value="Genome"/>
</dbReference>
<dbReference type="GO" id="GO:0016787">
    <property type="term" value="F:hydrolase activity"/>
    <property type="evidence" value="ECO:0007669"/>
    <property type="project" value="InterPro"/>
</dbReference>
<dbReference type="Gene3D" id="3.60.21.10">
    <property type="match status" value="1"/>
</dbReference>
<dbReference type="InterPro" id="IPR004843">
    <property type="entry name" value="Calcineurin-like_PHP_ApaH"/>
</dbReference>
<dbReference type="InterPro" id="IPR029052">
    <property type="entry name" value="Metallo-depent_PP-like"/>
</dbReference>
<dbReference type="Pfam" id="PF00149">
    <property type="entry name" value="Metallophos"/>
    <property type="match status" value="1"/>
</dbReference>
<dbReference type="SUPFAM" id="SSF56300">
    <property type="entry name" value="Metallo-dependent phosphatases"/>
    <property type="match status" value="1"/>
</dbReference>
<gene>
    <name type="primary">54</name>
</gene>
<keyword id="KW-1185">Reference proteome</keyword>
<protein>
    <recommendedName>
        <fullName>Gene 54 protein</fullName>
    </recommendedName>
    <alternativeName>
        <fullName>Gp54</fullName>
    </alternativeName>
</protein>
<name>VG54_BPML5</name>